<proteinExistence type="inferred from homology"/>
<keyword id="KW-0066">ATP synthesis</keyword>
<keyword id="KW-0997">Cell inner membrane</keyword>
<keyword id="KW-1003">Cell membrane</keyword>
<keyword id="KW-0139">CF(1)</keyword>
<keyword id="KW-0375">Hydrogen ion transport</keyword>
<keyword id="KW-0406">Ion transport</keyword>
<keyword id="KW-0472">Membrane</keyword>
<keyword id="KW-0813">Transport</keyword>
<reference key="1">
    <citation type="journal article" date="2004" name="Nat. Genet.">
        <title>Evidence in the Legionella pneumophila genome for exploitation of host cell functions and high genome plasticity.</title>
        <authorList>
            <person name="Cazalet C."/>
            <person name="Rusniok C."/>
            <person name="Brueggemann H."/>
            <person name="Zidane N."/>
            <person name="Magnier A."/>
            <person name="Ma L."/>
            <person name="Tichit M."/>
            <person name="Jarraud S."/>
            <person name="Bouchier C."/>
            <person name="Vandenesch F."/>
            <person name="Kunst F."/>
            <person name="Etienne J."/>
            <person name="Glaser P."/>
            <person name="Buchrieser C."/>
        </authorList>
    </citation>
    <scope>NUCLEOTIDE SEQUENCE [LARGE SCALE GENOMIC DNA]</scope>
    <source>
        <strain>Paris</strain>
    </source>
</reference>
<dbReference type="EMBL" id="CR628336">
    <property type="protein sequence ID" value="CAH14205.1"/>
    <property type="molecule type" value="Genomic_DNA"/>
</dbReference>
<dbReference type="RefSeq" id="WP_010948665.1">
    <property type="nucleotide sequence ID" value="NC_006368.1"/>
</dbReference>
<dbReference type="SMR" id="Q5X0P4"/>
<dbReference type="KEGG" id="lpp:lpp3052"/>
<dbReference type="LegioList" id="lpp3052"/>
<dbReference type="HOGENOM" id="CLU_084338_2_0_6"/>
<dbReference type="GO" id="GO:0005886">
    <property type="term" value="C:plasma membrane"/>
    <property type="evidence" value="ECO:0007669"/>
    <property type="project" value="UniProtKB-SubCell"/>
</dbReference>
<dbReference type="GO" id="GO:0045259">
    <property type="term" value="C:proton-transporting ATP synthase complex"/>
    <property type="evidence" value="ECO:0007669"/>
    <property type="project" value="UniProtKB-KW"/>
</dbReference>
<dbReference type="GO" id="GO:0005524">
    <property type="term" value="F:ATP binding"/>
    <property type="evidence" value="ECO:0007669"/>
    <property type="project" value="UniProtKB-UniRule"/>
</dbReference>
<dbReference type="GO" id="GO:0046933">
    <property type="term" value="F:proton-transporting ATP synthase activity, rotational mechanism"/>
    <property type="evidence" value="ECO:0007669"/>
    <property type="project" value="UniProtKB-UniRule"/>
</dbReference>
<dbReference type="CDD" id="cd12152">
    <property type="entry name" value="F1-ATPase_delta"/>
    <property type="match status" value="1"/>
</dbReference>
<dbReference type="FunFam" id="1.20.5.440:FF:000001">
    <property type="entry name" value="ATP synthase epsilon chain"/>
    <property type="match status" value="1"/>
</dbReference>
<dbReference type="FunFam" id="2.60.15.10:FF:000001">
    <property type="entry name" value="ATP synthase epsilon chain"/>
    <property type="match status" value="1"/>
</dbReference>
<dbReference type="Gene3D" id="1.20.5.440">
    <property type="entry name" value="ATP synthase delta/epsilon subunit, C-terminal domain"/>
    <property type="match status" value="1"/>
</dbReference>
<dbReference type="Gene3D" id="2.60.15.10">
    <property type="entry name" value="F0F1 ATP synthase delta/epsilon subunit, N-terminal"/>
    <property type="match status" value="1"/>
</dbReference>
<dbReference type="HAMAP" id="MF_00530">
    <property type="entry name" value="ATP_synth_epsil_bac"/>
    <property type="match status" value="1"/>
</dbReference>
<dbReference type="InterPro" id="IPR036794">
    <property type="entry name" value="ATP_F1_dsu/esu_C_sf"/>
</dbReference>
<dbReference type="InterPro" id="IPR001469">
    <property type="entry name" value="ATP_synth_F1_dsu/esu"/>
</dbReference>
<dbReference type="InterPro" id="IPR020546">
    <property type="entry name" value="ATP_synth_F1_dsu/esu_N"/>
</dbReference>
<dbReference type="InterPro" id="IPR020547">
    <property type="entry name" value="ATP_synth_F1_esu_C"/>
</dbReference>
<dbReference type="InterPro" id="IPR036771">
    <property type="entry name" value="ATPsynth_dsu/esu_N"/>
</dbReference>
<dbReference type="NCBIfam" id="TIGR01216">
    <property type="entry name" value="ATP_synt_epsi"/>
    <property type="match status" value="1"/>
</dbReference>
<dbReference type="NCBIfam" id="NF001847">
    <property type="entry name" value="PRK00571.1-4"/>
    <property type="match status" value="1"/>
</dbReference>
<dbReference type="PANTHER" id="PTHR13822">
    <property type="entry name" value="ATP SYNTHASE DELTA/EPSILON CHAIN"/>
    <property type="match status" value="1"/>
</dbReference>
<dbReference type="PANTHER" id="PTHR13822:SF10">
    <property type="entry name" value="ATP SYNTHASE EPSILON CHAIN, CHLOROPLASTIC"/>
    <property type="match status" value="1"/>
</dbReference>
<dbReference type="Pfam" id="PF00401">
    <property type="entry name" value="ATP-synt_DE"/>
    <property type="match status" value="1"/>
</dbReference>
<dbReference type="Pfam" id="PF02823">
    <property type="entry name" value="ATP-synt_DE_N"/>
    <property type="match status" value="1"/>
</dbReference>
<dbReference type="SUPFAM" id="SSF46604">
    <property type="entry name" value="Epsilon subunit of F1F0-ATP synthase C-terminal domain"/>
    <property type="match status" value="1"/>
</dbReference>
<dbReference type="SUPFAM" id="SSF51344">
    <property type="entry name" value="Epsilon subunit of F1F0-ATP synthase N-terminal domain"/>
    <property type="match status" value="1"/>
</dbReference>
<gene>
    <name evidence="1" type="primary">atpC</name>
    <name type="ordered locus">lpp3052</name>
</gene>
<comment type="function">
    <text evidence="1">Produces ATP from ADP in the presence of a proton gradient across the membrane.</text>
</comment>
<comment type="subunit">
    <text>F-type ATPases have 2 components, CF(1) - the catalytic core - and CF(0) - the membrane proton channel. CF(1) has five subunits: alpha(3), beta(3), gamma(1), delta(1), epsilon(1). CF(0) has three main subunits: a, b and c.</text>
</comment>
<comment type="subcellular location">
    <subcellularLocation>
        <location evidence="1">Cell inner membrane</location>
        <topology evidence="1">Peripheral membrane protein</topology>
    </subcellularLocation>
</comment>
<comment type="similarity">
    <text evidence="1">Belongs to the ATPase epsilon chain family.</text>
</comment>
<organism>
    <name type="scientific">Legionella pneumophila (strain Paris)</name>
    <dbReference type="NCBI Taxonomy" id="297246"/>
    <lineage>
        <taxon>Bacteria</taxon>
        <taxon>Pseudomonadati</taxon>
        <taxon>Pseudomonadota</taxon>
        <taxon>Gammaproteobacteria</taxon>
        <taxon>Legionellales</taxon>
        <taxon>Legionellaceae</taxon>
        <taxon>Legionella</taxon>
    </lineage>
</organism>
<accession>Q5X0P4</accession>
<feature type="chain" id="PRO_0000265833" description="ATP synthase epsilon chain">
    <location>
        <begin position="1"/>
        <end position="140"/>
    </location>
</feature>
<protein>
    <recommendedName>
        <fullName evidence="1">ATP synthase epsilon chain</fullName>
    </recommendedName>
    <alternativeName>
        <fullName evidence="1">ATP synthase F1 sector epsilon subunit</fullName>
    </alternativeName>
    <alternativeName>
        <fullName evidence="1">F-ATPase epsilon subunit</fullName>
    </alternativeName>
</protein>
<sequence>MSITTHLDIVSAEHEIFSGVVEMVVATGELGEIGITPGHAPLLTVLRPGEVRITLQGGTQDIYYVQGGMLEVQPHCVTILADVAERAEHLDEAAALAAKAKAEAAIASKGGDIDYSVAAAELARAVAQIRAIQKTRKKMK</sequence>
<evidence type="ECO:0000255" key="1">
    <source>
        <dbReference type="HAMAP-Rule" id="MF_00530"/>
    </source>
</evidence>
<name>ATPE_LEGPA</name>